<reference key="1">
    <citation type="journal article" date="2005" name="Jpn. Agric. Res. Q.">
        <title>Genome sequence of Xanthomonas oryzae pv. oryzae suggests contribution of large numbers of effector genes and insertion sequences to its race diversity.</title>
        <authorList>
            <person name="Ochiai H."/>
            <person name="Inoue Y."/>
            <person name="Takeya M."/>
            <person name="Sasaki A."/>
            <person name="Kaku H."/>
        </authorList>
    </citation>
    <scope>NUCLEOTIDE SEQUENCE [LARGE SCALE GENOMIC DNA]</scope>
    <source>
        <strain>MAFF 311018</strain>
    </source>
</reference>
<gene>
    <name evidence="1" type="primary">dctA</name>
    <name type="ordered locus">XOO1014</name>
</gene>
<organism>
    <name type="scientific">Xanthomonas oryzae pv. oryzae (strain MAFF 311018)</name>
    <dbReference type="NCBI Taxonomy" id="342109"/>
    <lineage>
        <taxon>Bacteria</taxon>
        <taxon>Pseudomonadati</taxon>
        <taxon>Pseudomonadota</taxon>
        <taxon>Gammaproteobacteria</taxon>
        <taxon>Lysobacterales</taxon>
        <taxon>Lysobacteraceae</taxon>
        <taxon>Xanthomonas</taxon>
    </lineage>
</organism>
<comment type="function">
    <text evidence="1">Responsible for the transport of dicarboxylates such as succinate, fumarate, and malate from the periplasm across the membrane.</text>
</comment>
<comment type="subcellular location">
    <subcellularLocation>
        <location evidence="1">Cell inner membrane</location>
        <topology evidence="1">Multi-pass membrane protein</topology>
    </subcellularLocation>
</comment>
<comment type="similarity">
    <text evidence="1">Belongs to the dicarboxylate/amino acid:cation symporter (DAACS) (TC 2.A.23) family.</text>
</comment>
<keyword id="KW-0997">Cell inner membrane</keyword>
<keyword id="KW-1003">Cell membrane</keyword>
<keyword id="KW-0472">Membrane</keyword>
<keyword id="KW-0769">Symport</keyword>
<keyword id="KW-0812">Transmembrane</keyword>
<keyword id="KW-1133">Transmembrane helix</keyword>
<keyword id="KW-0813">Transport</keyword>
<sequence length="457" mass="48128">MHISKPAGPLPASVPFYRQLYFQVVVAIILGALLGRFEPAFAESLKPLGDAFIKLVKMIIAPVIFLTIVTGIAGMTHLKTVGRVFGKAMVYFLFFSTLALVVGLVVAHVVQPGAGMNINPADLDQSAVKSYVEKSHDLTLVGFLMDIIPNSLIGAFTGDQVVNGKLTGPNILQVLFVAVLFGVSLALVGERGKPVLNLLEALIAPVFKLVHILMRAAPIGAFGAIAFTIGKYGVESLVNLAWLVGSFYLTSLLFVLVILGVVCRLCGFSVLKLIRYLKAELLLVLGTSSSESALPSLMEKMEKAGCEKSVVGLVVPTGYSFNLDGTNIYMTLAALFIAQATNTELTLGHQIALLAVAMLSSKGAAGVTGAGFITLAATLAVVPEVPVAGMALILGVDRFMSECRSLTNFIGNAVATVVVSRWENALDRDRLTLVLDGGEPPLLAPVGEPGVAPAALR</sequence>
<proteinExistence type="inferred from homology"/>
<evidence type="ECO:0000255" key="1">
    <source>
        <dbReference type="HAMAP-Rule" id="MF_01300"/>
    </source>
</evidence>
<protein>
    <recommendedName>
        <fullName evidence="1">C4-dicarboxylate transport protein</fullName>
    </recommendedName>
</protein>
<accession>Q2P6Q8</accession>
<dbReference type="EMBL" id="AP008229">
    <property type="protein sequence ID" value="BAE67769.1"/>
    <property type="molecule type" value="Genomic_DNA"/>
</dbReference>
<dbReference type="RefSeq" id="WP_011407775.1">
    <property type="nucleotide sequence ID" value="NC_007705.1"/>
</dbReference>
<dbReference type="SMR" id="Q2P6Q8"/>
<dbReference type="KEGG" id="xom:XOO1014"/>
<dbReference type="HOGENOM" id="CLU_019375_7_0_6"/>
<dbReference type="GO" id="GO:0005886">
    <property type="term" value="C:plasma membrane"/>
    <property type="evidence" value="ECO:0007669"/>
    <property type="project" value="UniProtKB-SubCell"/>
</dbReference>
<dbReference type="GO" id="GO:0015138">
    <property type="term" value="F:fumarate transmembrane transporter activity"/>
    <property type="evidence" value="ECO:0007669"/>
    <property type="project" value="TreeGrafter"/>
</dbReference>
<dbReference type="GO" id="GO:0015366">
    <property type="term" value="F:malate:proton symporter activity"/>
    <property type="evidence" value="ECO:0007669"/>
    <property type="project" value="TreeGrafter"/>
</dbReference>
<dbReference type="GO" id="GO:0015141">
    <property type="term" value="F:succinate transmembrane transporter activity"/>
    <property type="evidence" value="ECO:0007669"/>
    <property type="project" value="TreeGrafter"/>
</dbReference>
<dbReference type="GO" id="GO:0070778">
    <property type="term" value="P:L-aspartate transmembrane transport"/>
    <property type="evidence" value="ECO:0007669"/>
    <property type="project" value="TreeGrafter"/>
</dbReference>
<dbReference type="FunFam" id="1.10.3860.10:FF:000001">
    <property type="entry name" value="C4-dicarboxylate transport protein"/>
    <property type="match status" value="1"/>
</dbReference>
<dbReference type="Gene3D" id="1.10.3860.10">
    <property type="entry name" value="Sodium:dicarboxylate symporter"/>
    <property type="match status" value="1"/>
</dbReference>
<dbReference type="HAMAP" id="MF_01300">
    <property type="entry name" value="C4_dicarb_transport"/>
    <property type="match status" value="1"/>
</dbReference>
<dbReference type="InterPro" id="IPR023954">
    <property type="entry name" value="C4_dicarb_transport"/>
</dbReference>
<dbReference type="InterPro" id="IPR001991">
    <property type="entry name" value="Na-dicarboxylate_symporter"/>
</dbReference>
<dbReference type="InterPro" id="IPR018107">
    <property type="entry name" value="Na-dicarboxylate_symporter_CS"/>
</dbReference>
<dbReference type="InterPro" id="IPR036458">
    <property type="entry name" value="Na:dicarbo_symporter_sf"/>
</dbReference>
<dbReference type="NCBIfam" id="NF002461">
    <property type="entry name" value="PRK01663.1"/>
    <property type="match status" value="1"/>
</dbReference>
<dbReference type="NCBIfam" id="NF009587">
    <property type="entry name" value="PRK13027.1"/>
    <property type="match status" value="1"/>
</dbReference>
<dbReference type="PANTHER" id="PTHR42865:SF1">
    <property type="entry name" value="AEROBIC C4-DICARBOXYLATE TRANSPORT PROTEIN"/>
    <property type="match status" value="1"/>
</dbReference>
<dbReference type="PANTHER" id="PTHR42865">
    <property type="entry name" value="PROTON/GLUTAMATE-ASPARTATE SYMPORTER"/>
    <property type="match status" value="1"/>
</dbReference>
<dbReference type="Pfam" id="PF00375">
    <property type="entry name" value="SDF"/>
    <property type="match status" value="1"/>
</dbReference>
<dbReference type="PRINTS" id="PR00173">
    <property type="entry name" value="EDTRNSPORT"/>
</dbReference>
<dbReference type="SUPFAM" id="SSF118215">
    <property type="entry name" value="Proton glutamate symport protein"/>
    <property type="match status" value="1"/>
</dbReference>
<dbReference type="PROSITE" id="PS00713">
    <property type="entry name" value="NA_DICARBOXYL_SYMP_1"/>
    <property type="match status" value="1"/>
</dbReference>
<dbReference type="PROSITE" id="PS00714">
    <property type="entry name" value="NA_DICARBOXYL_SYMP_2"/>
    <property type="match status" value="1"/>
</dbReference>
<feature type="chain" id="PRO_1000067472" description="C4-dicarboxylate transport protein">
    <location>
        <begin position="1"/>
        <end position="457"/>
    </location>
</feature>
<feature type="transmembrane region" description="Helical" evidence="1">
    <location>
        <begin position="22"/>
        <end position="42"/>
    </location>
</feature>
<feature type="transmembrane region" description="Helical" evidence="1">
    <location>
        <begin position="55"/>
        <end position="75"/>
    </location>
</feature>
<feature type="transmembrane region" description="Helical" evidence="1">
    <location>
        <begin position="90"/>
        <end position="110"/>
    </location>
</feature>
<feature type="transmembrane region" description="Helical" evidence="1">
    <location>
        <begin position="138"/>
        <end position="158"/>
    </location>
</feature>
<feature type="transmembrane region" description="Helical" evidence="1">
    <location>
        <begin position="168"/>
        <end position="188"/>
    </location>
</feature>
<feature type="transmembrane region" description="Helical" evidence="1">
    <location>
        <begin position="209"/>
        <end position="229"/>
    </location>
</feature>
<feature type="transmembrane region" description="Helical" evidence="1">
    <location>
        <begin position="242"/>
        <end position="262"/>
    </location>
</feature>
<feature type="transmembrane region" description="Helical" evidence="1">
    <location>
        <begin position="335"/>
        <end position="357"/>
    </location>
</feature>
<feature type="transmembrane region" description="Helical" evidence="1">
    <location>
        <begin position="376"/>
        <end position="396"/>
    </location>
</feature>
<name>DCTA_XANOM</name>